<comment type="function">
    <text evidence="1">Removes N-terminal dipeptides sequentially from polypeptides (By similarity). Essential for control of distal tip cell migration.</text>
</comment>
<comment type="subcellular location">
    <subcellularLocation>
        <location evidence="1">Cell membrane</location>
        <topology evidence="1">Single-pass type II membrane protein</topology>
    </subcellularLocation>
</comment>
<comment type="alternative products">
    <event type="alternative splicing"/>
    <isoform>
        <id>P34422-1</id>
        <name>a</name>
        <sequence type="displayed"/>
    </isoform>
    <isoform>
        <id>P34422-2</id>
        <name>b</name>
        <sequence type="described" ref="VSP_007095 VSP_007096"/>
    </isoform>
    <isoform>
        <id>P34422-3</id>
        <name>c</name>
        <sequence type="described" ref="VSP_007097 VSP_007098"/>
    </isoform>
</comment>
<comment type="similarity">
    <text evidence="3">Belongs to the peptidase S9B family. DPPIV subfamily.</text>
</comment>
<feature type="chain" id="PRO_0000122435" description="Dipeptidyl peptidase family member 6">
    <location>
        <begin position="1"/>
        <end position="740"/>
    </location>
</feature>
<feature type="topological domain" description="Cytoplasmic" evidence="2">
    <location>
        <position position="1"/>
    </location>
</feature>
<feature type="transmembrane region" description="Helical; Signal-anchor for type II membrane protein" evidence="2">
    <location>
        <begin position="2"/>
        <end position="22"/>
    </location>
</feature>
<feature type="topological domain" description="Lumenal" evidence="2">
    <location>
        <begin position="23"/>
        <end position="740"/>
    </location>
</feature>
<feature type="active site" description="Charge relay system" evidence="1">
    <location>
        <position position="516"/>
    </location>
</feature>
<feature type="active site" description="Charge relay system" evidence="1">
    <location>
        <position position="604"/>
    </location>
</feature>
<feature type="active site" description="Charge relay system" evidence="1">
    <location>
        <position position="636"/>
    </location>
</feature>
<feature type="glycosylation site" description="N-linked (GlcNAc...) asparagine" evidence="2">
    <location>
        <position position="108"/>
    </location>
</feature>
<feature type="glycosylation site" description="N-linked (GlcNAc...) asparagine" evidence="2">
    <location>
        <position position="308"/>
    </location>
</feature>
<feature type="glycosylation site" description="N-linked (GlcNAc...) asparagine" evidence="2">
    <location>
        <position position="506"/>
    </location>
</feature>
<feature type="glycosylation site" description="N-linked (GlcNAc...) asparagine" evidence="2">
    <location>
        <position position="672"/>
    </location>
</feature>
<feature type="disulfide bond" evidence="1">
    <location>
        <begin position="535"/>
        <end position="658"/>
    </location>
</feature>
<feature type="splice variant" id="VSP_007095" description="In isoform b." evidence="3">
    <location>
        <begin position="1"/>
        <end position="229"/>
    </location>
</feature>
<feature type="splice variant" id="VSP_007096" description="In isoform b." evidence="3">
    <original>KAITM</original>
    <variation>MYNFR</variation>
    <location>
        <begin position="230"/>
        <end position="234"/>
    </location>
</feature>
<feature type="splice variant" id="VSP_007097" description="In isoform c." evidence="3">
    <original>D</original>
    <variation>E</variation>
    <location>
        <position position="573"/>
    </location>
</feature>
<feature type="splice variant" id="VSP_007098" description="In isoform c." evidence="3">
    <location>
        <begin position="574"/>
        <end position="740"/>
    </location>
</feature>
<proteinExistence type="inferred from homology"/>
<dbReference type="EC" id="3.4.14.-"/>
<dbReference type="EMBL" id="FO080400">
    <property type="protein sequence ID" value="CCD63439.1"/>
    <property type="molecule type" value="Genomic_DNA"/>
</dbReference>
<dbReference type="EMBL" id="FO080400">
    <property type="protein sequence ID" value="CCD63440.1"/>
    <property type="molecule type" value="Genomic_DNA"/>
</dbReference>
<dbReference type="EMBL" id="FO080400">
    <property type="protein sequence ID" value="CCD63441.1"/>
    <property type="molecule type" value="Genomic_DNA"/>
</dbReference>
<dbReference type="PIR" id="S44807">
    <property type="entry name" value="S44807"/>
</dbReference>
<dbReference type="RefSeq" id="NP_001370390.1">
    <molecule id="P34422-3"/>
    <property type="nucleotide sequence ID" value="NM_001382930.2"/>
</dbReference>
<dbReference type="RefSeq" id="NP_741240.1">
    <molecule id="P34422-1"/>
    <property type="nucleotide sequence ID" value="NM_171203.7"/>
</dbReference>
<dbReference type="RefSeq" id="NP_741241.1">
    <property type="nucleotide sequence ID" value="NM_171204.3"/>
</dbReference>
<dbReference type="RefSeq" id="NP_741242.1">
    <molecule id="P34422-2"/>
    <property type="nucleotide sequence ID" value="NM_171205.6"/>
</dbReference>
<dbReference type="SMR" id="P34422"/>
<dbReference type="BioGRID" id="41338">
    <property type="interactions" value="1"/>
</dbReference>
<dbReference type="STRING" id="6239.F44B9.1a.2"/>
<dbReference type="ESTHER" id="caeel-f44b9.1">
    <property type="family name" value="Prolyl_oligopeptidase_S9"/>
</dbReference>
<dbReference type="MEROPS" id="S09.A77"/>
<dbReference type="GlyCosmos" id="P34422">
    <property type="glycosylation" value="4 sites, No reported glycans"/>
</dbReference>
<dbReference type="PaxDb" id="6239-F44B9.1a"/>
<dbReference type="PeptideAtlas" id="P34422"/>
<dbReference type="EnsemblMetazoa" id="F44B9.1a.1">
    <molecule id="P34422-1"/>
    <property type="protein sequence ID" value="F44B9.1a.1"/>
    <property type="gene ID" value="WBGene00001059"/>
</dbReference>
<dbReference type="EnsemblMetazoa" id="F44B9.1b.1">
    <molecule id="P34422-2"/>
    <property type="protein sequence ID" value="F44B9.1b.1"/>
    <property type="gene ID" value="WBGene00001059"/>
</dbReference>
<dbReference type="EnsemblMetazoa" id="F44B9.1c.1">
    <molecule id="P34422-3"/>
    <property type="protein sequence ID" value="F44B9.1c.1"/>
    <property type="gene ID" value="WBGene00001059"/>
</dbReference>
<dbReference type="GeneID" id="176132"/>
<dbReference type="KEGG" id="cel:CELE_F44B9.1"/>
<dbReference type="UCSC" id="F44B9.1b">
    <molecule id="P34422-1"/>
    <property type="organism name" value="c. elegans"/>
</dbReference>
<dbReference type="AGR" id="WB:WBGene00001059"/>
<dbReference type="CTD" id="176132"/>
<dbReference type="WormBase" id="F44B9.1a">
    <molecule id="P34422-1"/>
    <property type="protein sequence ID" value="CE30989"/>
    <property type="gene ID" value="WBGene00001059"/>
    <property type="gene designation" value="dpf-6"/>
</dbReference>
<dbReference type="WormBase" id="F44B9.1b">
    <molecule id="P34422-2"/>
    <property type="protein sequence ID" value="CE30990"/>
    <property type="gene ID" value="WBGene00001059"/>
    <property type="gene designation" value="dpf-6"/>
</dbReference>
<dbReference type="WormBase" id="F44B9.1c">
    <molecule id="P34422-3"/>
    <property type="protein sequence ID" value="CE30991"/>
    <property type="gene ID" value="WBGene00001059"/>
    <property type="gene designation" value="dpf-6"/>
</dbReference>
<dbReference type="eggNOG" id="KOG2100">
    <property type="taxonomic scope" value="Eukaryota"/>
</dbReference>
<dbReference type="InParanoid" id="P34422"/>
<dbReference type="OMA" id="PEHQWLA"/>
<dbReference type="OrthoDB" id="416344at2759"/>
<dbReference type="PhylomeDB" id="P34422"/>
<dbReference type="PRO" id="PR:P34422"/>
<dbReference type="Proteomes" id="UP000001940">
    <property type="component" value="Chromosome III"/>
</dbReference>
<dbReference type="Bgee" id="WBGene00001059">
    <property type="expression patterns" value="Expressed in pharyngeal muscle cell (C elegans) and 3 other cell types or tissues"/>
</dbReference>
<dbReference type="GO" id="GO:0005886">
    <property type="term" value="C:plasma membrane"/>
    <property type="evidence" value="ECO:0007669"/>
    <property type="project" value="UniProtKB-SubCell"/>
</dbReference>
<dbReference type="GO" id="GO:0004177">
    <property type="term" value="F:aminopeptidase activity"/>
    <property type="evidence" value="ECO:0007669"/>
    <property type="project" value="UniProtKB-KW"/>
</dbReference>
<dbReference type="GO" id="GO:0004252">
    <property type="term" value="F:serine-type endopeptidase activity"/>
    <property type="evidence" value="ECO:0000318"/>
    <property type="project" value="GO_Central"/>
</dbReference>
<dbReference type="GO" id="GO:0006508">
    <property type="term" value="P:proteolysis"/>
    <property type="evidence" value="ECO:0007669"/>
    <property type="project" value="UniProtKB-KW"/>
</dbReference>
<dbReference type="Gene3D" id="3.40.50.1820">
    <property type="entry name" value="alpha/beta hydrolase"/>
    <property type="match status" value="1"/>
</dbReference>
<dbReference type="InterPro" id="IPR029058">
    <property type="entry name" value="AB_hydrolase_fold"/>
</dbReference>
<dbReference type="InterPro" id="IPR001375">
    <property type="entry name" value="Peptidase_S9_cat"/>
</dbReference>
<dbReference type="PANTHER" id="PTHR42776:SF27">
    <property type="entry name" value="DIPEPTIDYL PEPTIDASE FAMILY MEMBER 6"/>
    <property type="match status" value="1"/>
</dbReference>
<dbReference type="PANTHER" id="PTHR42776">
    <property type="entry name" value="SERINE PEPTIDASE S9 FAMILY MEMBER"/>
    <property type="match status" value="1"/>
</dbReference>
<dbReference type="Pfam" id="PF00326">
    <property type="entry name" value="Peptidase_S9"/>
    <property type="match status" value="1"/>
</dbReference>
<dbReference type="SUPFAM" id="SSF53474">
    <property type="entry name" value="alpha/beta-Hydrolases"/>
    <property type="match status" value="1"/>
</dbReference>
<dbReference type="SUPFAM" id="SSF82171">
    <property type="entry name" value="DPP6 N-terminal domain-like"/>
    <property type="match status" value="1"/>
</dbReference>
<reference key="1">
    <citation type="journal article" date="1994" name="Nature">
        <title>2.2 Mb of contiguous nucleotide sequence from chromosome III of C. elegans.</title>
        <authorList>
            <person name="Wilson R."/>
            <person name="Ainscough R."/>
            <person name="Anderson K."/>
            <person name="Baynes C."/>
            <person name="Berks M."/>
            <person name="Bonfield J."/>
            <person name="Burton J."/>
            <person name="Connell M."/>
            <person name="Copsey T."/>
            <person name="Cooper J."/>
            <person name="Coulson A."/>
            <person name="Craxton M."/>
            <person name="Dear S."/>
            <person name="Du Z."/>
            <person name="Durbin R."/>
            <person name="Favello A."/>
            <person name="Fraser A."/>
            <person name="Fulton L."/>
            <person name="Gardner A."/>
            <person name="Green P."/>
            <person name="Hawkins T."/>
            <person name="Hillier L."/>
            <person name="Jier M."/>
            <person name="Johnston L."/>
            <person name="Jones M."/>
            <person name="Kershaw J."/>
            <person name="Kirsten J."/>
            <person name="Laisster N."/>
            <person name="Latreille P."/>
            <person name="Lightning J."/>
            <person name="Lloyd C."/>
            <person name="Mortimore B."/>
            <person name="O'Callaghan M."/>
            <person name="Parsons J."/>
            <person name="Percy C."/>
            <person name="Rifken L."/>
            <person name="Roopra A."/>
            <person name="Saunders D."/>
            <person name="Shownkeen R."/>
            <person name="Sims M."/>
            <person name="Smaldon N."/>
            <person name="Smith A."/>
            <person name="Smith M."/>
            <person name="Sonnhammer E."/>
            <person name="Staden R."/>
            <person name="Sulston J."/>
            <person name="Thierry-Mieg J."/>
            <person name="Thomas K."/>
            <person name="Vaudin M."/>
            <person name="Vaughan K."/>
            <person name="Waterston R."/>
            <person name="Watson A."/>
            <person name="Weinstock L."/>
            <person name="Wilkinson-Sproat J."/>
            <person name="Wohldman P."/>
        </authorList>
    </citation>
    <scope>NUCLEOTIDE SEQUENCE [LARGE SCALE GENOMIC DNA]</scope>
    <source>
        <strain>Bristol N2</strain>
    </source>
</reference>
<reference key="2">
    <citation type="journal article" date="1998" name="Science">
        <title>Genome sequence of the nematode C. elegans: a platform for investigating biology.</title>
        <authorList>
            <consortium name="The C. elegans sequencing consortium"/>
        </authorList>
    </citation>
    <scope>NUCLEOTIDE SEQUENCE [LARGE SCALE GENOMIC DNA]</scope>
    <scope>ALTERNATIVE SPLICING</scope>
    <source>
        <strain>Bristol N2</strain>
    </source>
</reference>
<evidence type="ECO:0000250" key="1"/>
<evidence type="ECO:0000255" key="2"/>
<evidence type="ECO:0000305" key="3"/>
<name>DPF6_CAEEL</name>
<accession>P34422</accession>
<accession>Q8MQ47</accession>
<accession>Q8MQ48</accession>
<accession>Q8MQ49</accession>
<gene>
    <name type="primary">dpf-6</name>
    <name type="ORF">F44B9.1</name>
</gene>
<organism>
    <name type="scientific">Caenorhabditis elegans</name>
    <dbReference type="NCBI Taxonomy" id="6239"/>
    <lineage>
        <taxon>Eukaryota</taxon>
        <taxon>Metazoa</taxon>
        <taxon>Ecdysozoa</taxon>
        <taxon>Nematoda</taxon>
        <taxon>Chromadorea</taxon>
        <taxon>Rhabditida</taxon>
        <taxon>Rhabditina</taxon>
        <taxon>Rhabditomorpha</taxon>
        <taxon>Rhabditoidea</taxon>
        <taxon>Rhabditidae</taxon>
        <taxon>Peloderinae</taxon>
        <taxon>Caenorhabditis</taxon>
    </lineage>
</organism>
<keyword id="KW-0025">Alternative splicing</keyword>
<keyword id="KW-0031">Aminopeptidase</keyword>
<keyword id="KW-1003">Cell membrane</keyword>
<keyword id="KW-1015">Disulfide bond</keyword>
<keyword id="KW-0325">Glycoprotein</keyword>
<keyword id="KW-0378">Hydrolase</keyword>
<keyword id="KW-0472">Membrane</keyword>
<keyword id="KW-0645">Protease</keyword>
<keyword id="KW-1185">Reference proteome</keyword>
<keyword id="KW-0720">Serine protease</keyword>
<keyword id="KW-0735">Signal-anchor</keyword>
<keyword id="KW-0812">Transmembrane</keyword>
<keyword id="KW-1133">Transmembrane helix</keyword>
<protein>
    <recommendedName>
        <fullName>Dipeptidyl peptidase family member 6</fullName>
        <ecNumber>3.4.14.-</ecNumber>
    </recommendedName>
</protein>
<sequence>MLFLPILILNLLIITHAIDIIPREVLFQDPKYSSVSLSPDAKQVGYVAPDENGIRNVFTRCSSCSYSRQVTFETEHPILNYVWTAIPDVILFTQDNHGDENTRIYKKNISATAIAADKTQRVVISEKPMVKAMILSNNLISETVLIGMNDENPALHNIYAFNCQTDELKLVLQNRRFSIFFFDNDLNVRLASEEGPDGEMIYYRPRSNEGARTTEQNTWVEYLRIQHDDKAITMPITFDKSNNFMYWIMGDGSDLGNLVVFPFEDPQQKEILYTAQRAQIGNVLIHPTDKTLLAVTEVYHKPELFVANETFMEDLQYLVNMKPSGSMNIVSMSIDMSTWLVTYSSSDEPYDIYLYRRWNKKAELFMSTRPELKKYTLNKQIGFDFRARDEMTIQAYLSLPPQAPLLKSSQVPDGDRPYANLGMIPAVPQKMIVLVHGGPKARDHYGFSPMNAWLTNRGYSVLQVNFRGSTGFGKRLTNAGNGEWGRKMHFDILDAVEFAVSKGIANRSEVAVMGGSYGGYETLVALTFTPQTFACGVDIVGPSNLISLVQAIPPYWLGFRKDLIKMVGADISDEEGRQSLQSRSPLFFADRVTKPIMIIQGANDPRVKQAESDQFVAALEKKHIPVTYLLYPDEGHGVRKPQNSMEQHGHIETFLQQCLGGETQPFQPGQYNSSAIIKKIGIEGAAIARQNLQIAQNQFAQQLPRGPVAPSIFYRPPVRAQRVMLAPNQNVMNRIFPVQG</sequence>